<comment type="function">
    <text>Involved in oxygen transport from the lung to the various peripheral tissues.</text>
</comment>
<comment type="subunit">
    <text>Heterotetramer of two alpha chains and two beta chains.</text>
</comment>
<comment type="tissue specificity">
    <text>Red blood cells.</text>
</comment>
<comment type="polymorphism">
    <text evidence="4">There are two alleles. The sequence shown is that of beta-II.</text>
</comment>
<comment type="similarity">
    <text evidence="3">Belongs to the globin family.</text>
</comment>
<keyword id="KW-0007">Acetylation</keyword>
<keyword id="KW-0903">Direct protein sequencing</keyword>
<keyword id="KW-0349">Heme</keyword>
<keyword id="KW-0408">Iron</keyword>
<keyword id="KW-0479">Metal-binding</keyword>
<keyword id="KW-0561">Oxygen transport</keyword>
<keyword id="KW-0597">Phosphoprotein</keyword>
<keyword id="KW-1185">Reference proteome</keyword>
<keyword id="KW-0702">S-nitrosylation</keyword>
<keyword id="KW-0813">Transport</keyword>
<evidence type="ECO:0000250" key="1">
    <source>
        <dbReference type="UniProtKB" id="P02086"/>
    </source>
</evidence>
<evidence type="ECO:0000250" key="2">
    <source>
        <dbReference type="UniProtKB" id="P68871"/>
    </source>
</evidence>
<evidence type="ECO:0000255" key="3">
    <source>
        <dbReference type="PROSITE-ProRule" id="PRU00238"/>
    </source>
</evidence>
<evidence type="ECO:0000269" key="4">
    <source>
    </source>
</evidence>
<reference key="1">
    <citation type="journal article" date="1986" name="Biol. Chem. Hoppe-Seyler">
        <title>The primary structure of sperm whale hemoglobin (Physeter catodon, cetacea).</title>
        <authorList>
            <person name="Abbasi A."/>
            <person name="Braunitzer G."/>
            <person name="Matsuda G."/>
            <person name="Maita T."/>
        </authorList>
    </citation>
    <scope>PROTEIN SEQUENCE</scope>
</reference>
<sequence length="146" mass="16184">VHLTGEEKSGLTALWAKVNVEEIGGEALGRLLVVYPWTQRFFEHFGDLSTADAVMKNPKVKKHGQKVLASFGEGLKHLDNLKGTFATLSELHCDKLHVDPENFRLLGNVLVVVLARHFGKEFTPELQTAYQKVVAGVANALAHKYH</sequence>
<name>HBB_PHYMC</name>
<protein>
    <recommendedName>
        <fullName>Hemoglobin subunit beta-1/2</fullName>
    </recommendedName>
    <alternativeName>
        <fullName>Beta-1/2-globin</fullName>
    </alternativeName>
    <alternativeName>
        <fullName>Hemoglobin beta-1/2 chain</fullName>
    </alternativeName>
    <alternativeName>
        <fullName>Hemoglobin beta-I/II chain</fullName>
    </alternativeName>
</protein>
<feature type="chain" id="PRO_0000053070" description="Hemoglobin subunit beta-1/2">
    <location>
        <begin position="1"/>
        <end position="146"/>
    </location>
</feature>
<feature type="domain" description="Globin" evidence="3">
    <location>
        <begin position="2"/>
        <end position="146"/>
    </location>
</feature>
<feature type="binding site" description="distal binding residue">
    <location>
        <position position="63"/>
    </location>
    <ligand>
        <name>heme b</name>
        <dbReference type="ChEBI" id="CHEBI:60344"/>
    </ligand>
    <ligandPart>
        <name>Fe</name>
        <dbReference type="ChEBI" id="CHEBI:18248"/>
    </ligandPart>
</feature>
<feature type="binding site" description="proximal binding residue">
    <location>
        <position position="92"/>
    </location>
    <ligand>
        <name>heme b</name>
        <dbReference type="ChEBI" id="CHEBI:60344"/>
    </ligand>
    <ligandPart>
        <name>Fe</name>
        <dbReference type="ChEBI" id="CHEBI:18248"/>
    </ligandPart>
</feature>
<feature type="modified residue" description="N-acetylvaline" evidence="1">
    <location>
        <position position="1"/>
    </location>
</feature>
<feature type="modified residue" description="Phosphothreonine" evidence="2">
    <location>
        <position position="12"/>
    </location>
</feature>
<feature type="modified residue" description="N6-acetyllysine" evidence="2">
    <location>
        <position position="59"/>
    </location>
</feature>
<feature type="modified residue" description="N6-acetyllysine" evidence="2">
    <location>
        <position position="82"/>
    </location>
</feature>
<feature type="modified residue" description="S-nitrosocysteine" evidence="2">
    <location>
        <position position="93"/>
    </location>
</feature>
<feature type="modified residue" description="N6-acetyllysine" evidence="2">
    <location>
        <position position="144"/>
    </location>
</feature>
<feature type="sequence variant" description="In beta-1." evidence="4">
    <original>H</original>
    <variation>Q</variation>
    <location>
        <position position="2"/>
    </location>
</feature>
<feature type="sequence variant" description="In beta-1." evidence="4">
    <original>G</original>
    <variation>A</variation>
    <location>
        <position position="5"/>
    </location>
</feature>
<feature type="sequence variant" description="In beta-1." evidence="4">
    <original>L</original>
    <variation>V</variation>
    <location>
        <position position="11"/>
    </location>
</feature>
<proteinExistence type="evidence at protein level"/>
<dbReference type="PIR" id="B25728">
    <property type="entry name" value="B25728"/>
</dbReference>
<dbReference type="SMR" id="P09905"/>
<dbReference type="FunCoup" id="P09905">
    <property type="interactions" value="179"/>
</dbReference>
<dbReference type="STRING" id="9755.ENSPCTP00005030320"/>
<dbReference type="InParanoid" id="P09905"/>
<dbReference type="Proteomes" id="UP000248484">
    <property type="component" value="Unplaced"/>
</dbReference>
<dbReference type="GO" id="GO:0072562">
    <property type="term" value="C:blood microparticle"/>
    <property type="evidence" value="ECO:0007669"/>
    <property type="project" value="TreeGrafter"/>
</dbReference>
<dbReference type="GO" id="GO:0031838">
    <property type="term" value="C:haptoglobin-hemoglobin complex"/>
    <property type="evidence" value="ECO:0007669"/>
    <property type="project" value="TreeGrafter"/>
</dbReference>
<dbReference type="GO" id="GO:0005833">
    <property type="term" value="C:hemoglobin complex"/>
    <property type="evidence" value="ECO:0007669"/>
    <property type="project" value="InterPro"/>
</dbReference>
<dbReference type="GO" id="GO:0031720">
    <property type="term" value="F:haptoglobin binding"/>
    <property type="evidence" value="ECO:0007669"/>
    <property type="project" value="TreeGrafter"/>
</dbReference>
<dbReference type="GO" id="GO:0020037">
    <property type="term" value="F:heme binding"/>
    <property type="evidence" value="ECO:0007669"/>
    <property type="project" value="InterPro"/>
</dbReference>
<dbReference type="GO" id="GO:0031721">
    <property type="term" value="F:hemoglobin alpha binding"/>
    <property type="evidence" value="ECO:0007669"/>
    <property type="project" value="TreeGrafter"/>
</dbReference>
<dbReference type="GO" id="GO:0046872">
    <property type="term" value="F:metal ion binding"/>
    <property type="evidence" value="ECO:0007669"/>
    <property type="project" value="UniProtKB-KW"/>
</dbReference>
<dbReference type="GO" id="GO:0043177">
    <property type="term" value="F:organic acid binding"/>
    <property type="evidence" value="ECO:0007669"/>
    <property type="project" value="TreeGrafter"/>
</dbReference>
<dbReference type="GO" id="GO:0019825">
    <property type="term" value="F:oxygen binding"/>
    <property type="evidence" value="ECO:0007669"/>
    <property type="project" value="InterPro"/>
</dbReference>
<dbReference type="GO" id="GO:0005344">
    <property type="term" value="F:oxygen carrier activity"/>
    <property type="evidence" value="ECO:0007669"/>
    <property type="project" value="UniProtKB-KW"/>
</dbReference>
<dbReference type="GO" id="GO:0004601">
    <property type="term" value="F:peroxidase activity"/>
    <property type="evidence" value="ECO:0007669"/>
    <property type="project" value="TreeGrafter"/>
</dbReference>
<dbReference type="GO" id="GO:0042744">
    <property type="term" value="P:hydrogen peroxide catabolic process"/>
    <property type="evidence" value="ECO:0007669"/>
    <property type="project" value="TreeGrafter"/>
</dbReference>
<dbReference type="CDD" id="cd08925">
    <property type="entry name" value="Hb-beta-like"/>
    <property type="match status" value="1"/>
</dbReference>
<dbReference type="FunFam" id="1.10.490.10:FF:000001">
    <property type="entry name" value="Hemoglobin subunit beta"/>
    <property type="match status" value="1"/>
</dbReference>
<dbReference type="Gene3D" id="1.10.490.10">
    <property type="entry name" value="Globins"/>
    <property type="match status" value="1"/>
</dbReference>
<dbReference type="InterPro" id="IPR000971">
    <property type="entry name" value="Globin"/>
</dbReference>
<dbReference type="InterPro" id="IPR009050">
    <property type="entry name" value="Globin-like_sf"/>
</dbReference>
<dbReference type="InterPro" id="IPR012292">
    <property type="entry name" value="Globin/Proto"/>
</dbReference>
<dbReference type="InterPro" id="IPR002337">
    <property type="entry name" value="Hemoglobin_b"/>
</dbReference>
<dbReference type="InterPro" id="IPR050056">
    <property type="entry name" value="Hemoglobin_oxygen_transport"/>
</dbReference>
<dbReference type="PANTHER" id="PTHR11442">
    <property type="entry name" value="HEMOGLOBIN FAMILY MEMBER"/>
    <property type="match status" value="1"/>
</dbReference>
<dbReference type="PANTHER" id="PTHR11442:SF42">
    <property type="entry name" value="HEMOGLOBIN SUBUNIT BETA"/>
    <property type="match status" value="1"/>
</dbReference>
<dbReference type="Pfam" id="PF00042">
    <property type="entry name" value="Globin"/>
    <property type="match status" value="1"/>
</dbReference>
<dbReference type="PRINTS" id="PR00814">
    <property type="entry name" value="BETAHAEM"/>
</dbReference>
<dbReference type="SUPFAM" id="SSF46458">
    <property type="entry name" value="Globin-like"/>
    <property type="match status" value="1"/>
</dbReference>
<dbReference type="PROSITE" id="PS01033">
    <property type="entry name" value="GLOBIN"/>
    <property type="match status" value="1"/>
</dbReference>
<accession>P09905</accession>
<organism>
    <name type="scientific">Physeter macrocephalus</name>
    <name type="common">Sperm whale</name>
    <name type="synonym">Physeter catodon</name>
    <dbReference type="NCBI Taxonomy" id="9755"/>
    <lineage>
        <taxon>Eukaryota</taxon>
        <taxon>Metazoa</taxon>
        <taxon>Chordata</taxon>
        <taxon>Craniata</taxon>
        <taxon>Vertebrata</taxon>
        <taxon>Euteleostomi</taxon>
        <taxon>Mammalia</taxon>
        <taxon>Eutheria</taxon>
        <taxon>Laurasiatheria</taxon>
        <taxon>Artiodactyla</taxon>
        <taxon>Whippomorpha</taxon>
        <taxon>Cetacea</taxon>
        <taxon>Odontoceti</taxon>
        <taxon>Physeteridae</taxon>
        <taxon>Physeter</taxon>
    </lineage>
</organism>
<gene>
    <name type="primary">HBB</name>
</gene>